<comment type="function">
    <text evidence="1">Could be a nuclease involved in processing of the 5'-end of pre-16S rRNA.</text>
</comment>
<comment type="subcellular location">
    <subcellularLocation>
        <location evidence="1">Cytoplasm</location>
    </subcellularLocation>
</comment>
<comment type="similarity">
    <text evidence="1">Belongs to the YqgF nuclease family.</text>
</comment>
<feature type="chain" id="PRO_0000172046" description="Putative pre-16S rRNA nuclease">
    <location>
        <begin position="1"/>
        <end position="142"/>
    </location>
</feature>
<sequence>MSSSSHKRIIGIDFGTKRIGVALSDPLRMFAQPLGTFDMEGLVRVLSRVRDDEGIELVVVGYPMSDKGEENRMTGVIDRFVAELRESFPGTLIETFDEHRSSRTAMKILAASGSSRKKRNEKGRLDTAAACLILQGYLDSHS</sequence>
<proteinExistence type="inferred from homology"/>
<gene>
    <name type="ordered locus">CT0082</name>
</gene>
<name>YQGF_CHLTE</name>
<accession>Q8KG86</accession>
<protein>
    <recommendedName>
        <fullName evidence="1">Putative pre-16S rRNA nuclease</fullName>
        <ecNumber evidence="1">3.1.-.-</ecNumber>
    </recommendedName>
</protein>
<organism>
    <name type="scientific">Chlorobaculum tepidum (strain ATCC 49652 / DSM 12025 / NBRC 103806 / TLS)</name>
    <name type="common">Chlorobium tepidum</name>
    <dbReference type="NCBI Taxonomy" id="194439"/>
    <lineage>
        <taxon>Bacteria</taxon>
        <taxon>Pseudomonadati</taxon>
        <taxon>Chlorobiota</taxon>
        <taxon>Chlorobiia</taxon>
        <taxon>Chlorobiales</taxon>
        <taxon>Chlorobiaceae</taxon>
        <taxon>Chlorobaculum</taxon>
    </lineage>
</organism>
<dbReference type="EC" id="3.1.-.-" evidence="1"/>
<dbReference type="EMBL" id="AE006470">
    <property type="protein sequence ID" value="AAM71330.1"/>
    <property type="molecule type" value="Genomic_DNA"/>
</dbReference>
<dbReference type="RefSeq" id="NP_660988.1">
    <property type="nucleotide sequence ID" value="NC_002932.3"/>
</dbReference>
<dbReference type="RefSeq" id="WP_010931776.1">
    <property type="nucleotide sequence ID" value="NC_002932.3"/>
</dbReference>
<dbReference type="SMR" id="Q8KG86"/>
<dbReference type="STRING" id="194439.CT0082"/>
<dbReference type="EnsemblBacteria" id="AAM71330">
    <property type="protein sequence ID" value="AAM71330"/>
    <property type="gene ID" value="CT0082"/>
</dbReference>
<dbReference type="KEGG" id="cte:CT0082"/>
<dbReference type="PATRIC" id="fig|194439.7.peg.82"/>
<dbReference type="eggNOG" id="COG0816">
    <property type="taxonomic scope" value="Bacteria"/>
</dbReference>
<dbReference type="HOGENOM" id="CLU_098240_2_1_10"/>
<dbReference type="OrthoDB" id="9796140at2"/>
<dbReference type="Proteomes" id="UP000001007">
    <property type="component" value="Chromosome"/>
</dbReference>
<dbReference type="GO" id="GO:0005829">
    <property type="term" value="C:cytosol"/>
    <property type="evidence" value="ECO:0007669"/>
    <property type="project" value="TreeGrafter"/>
</dbReference>
<dbReference type="GO" id="GO:0004518">
    <property type="term" value="F:nuclease activity"/>
    <property type="evidence" value="ECO:0007669"/>
    <property type="project" value="UniProtKB-KW"/>
</dbReference>
<dbReference type="GO" id="GO:0000967">
    <property type="term" value="P:rRNA 5'-end processing"/>
    <property type="evidence" value="ECO:0007669"/>
    <property type="project" value="UniProtKB-UniRule"/>
</dbReference>
<dbReference type="CDD" id="cd16964">
    <property type="entry name" value="YqgF"/>
    <property type="match status" value="1"/>
</dbReference>
<dbReference type="Gene3D" id="3.30.420.140">
    <property type="entry name" value="YqgF/RNase H-like domain"/>
    <property type="match status" value="1"/>
</dbReference>
<dbReference type="HAMAP" id="MF_00651">
    <property type="entry name" value="Nuclease_YqgF"/>
    <property type="match status" value="1"/>
</dbReference>
<dbReference type="InterPro" id="IPR012337">
    <property type="entry name" value="RNaseH-like_sf"/>
</dbReference>
<dbReference type="InterPro" id="IPR005227">
    <property type="entry name" value="YqgF"/>
</dbReference>
<dbReference type="InterPro" id="IPR006641">
    <property type="entry name" value="YqgF/RNaseH-like_dom"/>
</dbReference>
<dbReference type="InterPro" id="IPR037027">
    <property type="entry name" value="YqgF/RNaseH-like_dom_sf"/>
</dbReference>
<dbReference type="NCBIfam" id="TIGR00250">
    <property type="entry name" value="RNAse_H_YqgF"/>
    <property type="match status" value="1"/>
</dbReference>
<dbReference type="PANTHER" id="PTHR33317">
    <property type="entry name" value="POLYNUCLEOTIDYL TRANSFERASE, RIBONUCLEASE H-LIKE SUPERFAMILY PROTEIN"/>
    <property type="match status" value="1"/>
</dbReference>
<dbReference type="PANTHER" id="PTHR33317:SF4">
    <property type="entry name" value="POLYNUCLEOTIDYL TRANSFERASE, RIBONUCLEASE H-LIKE SUPERFAMILY PROTEIN"/>
    <property type="match status" value="1"/>
</dbReference>
<dbReference type="Pfam" id="PF03652">
    <property type="entry name" value="RuvX"/>
    <property type="match status" value="1"/>
</dbReference>
<dbReference type="SMART" id="SM00732">
    <property type="entry name" value="YqgFc"/>
    <property type="match status" value="1"/>
</dbReference>
<dbReference type="SUPFAM" id="SSF53098">
    <property type="entry name" value="Ribonuclease H-like"/>
    <property type="match status" value="1"/>
</dbReference>
<reference key="1">
    <citation type="journal article" date="2002" name="Proc. Natl. Acad. Sci. U.S.A.">
        <title>The complete genome sequence of Chlorobium tepidum TLS, a photosynthetic, anaerobic, green-sulfur bacterium.</title>
        <authorList>
            <person name="Eisen J.A."/>
            <person name="Nelson K.E."/>
            <person name="Paulsen I.T."/>
            <person name="Heidelberg J.F."/>
            <person name="Wu M."/>
            <person name="Dodson R.J."/>
            <person name="DeBoy R.T."/>
            <person name="Gwinn M.L."/>
            <person name="Nelson W.C."/>
            <person name="Haft D.H."/>
            <person name="Hickey E.K."/>
            <person name="Peterson J.D."/>
            <person name="Durkin A.S."/>
            <person name="Kolonay J.F."/>
            <person name="Yang F."/>
            <person name="Holt I.E."/>
            <person name="Umayam L.A."/>
            <person name="Mason T.M."/>
            <person name="Brenner M."/>
            <person name="Shea T.P."/>
            <person name="Parksey D.S."/>
            <person name="Nierman W.C."/>
            <person name="Feldblyum T.V."/>
            <person name="Hansen C.L."/>
            <person name="Craven M.B."/>
            <person name="Radune D."/>
            <person name="Vamathevan J.J."/>
            <person name="Khouri H.M."/>
            <person name="White O."/>
            <person name="Gruber T.M."/>
            <person name="Ketchum K.A."/>
            <person name="Venter J.C."/>
            <person name="Tettelin H."/>
            <person name="Bryant D.A."/>
            <person name="Fraser C.M."/>
        </authorList>
    </citation>
    <scope>NUCLEOTIDE SEQUENCE [LARGE SCALE GENOMIC DNA]</scope>
    <source>
        <strain>ATCC 49652 / DSM 12025 / NBRC 103806 / TLS</strain>
    </source>
</reference>
<keyword id="KW-0963">Cytoplasm</keyword>
<keyword id="KW-0378">Hydrolase</keyword>
<keyword id="KW-0540">Nuclease</keyword>
<keyword id="KW-1185">Reference proteome</keyword>
<keyword id="KW-0690">Ribosome biogenesis</keyword>
<evidence type="ECO:0000255" key="1">
    <source>
        <dbReference type="HAMAP-Rule" id="MF_00651"/>
    </source>
</evidence>